<name>ASXL2_MOUSE</name>
<dbReference type="EMBL" id="AK036839">
    <property type="protein sequence ID" value="BAC29602.1"/>
    <property type="molecule type" value="mRNA"/>
</dbReference>
<dbReference type="EMBL" id="AK162455">
    <property type="protein sequence ID" value="BAE36927.1"/>
    <property type="molecule type" value="mRNA"/>
</dbReference>
<dbReference type="EMBL" id="AK122540">
    <property type="protein sequence ID" value="BAC65822.1"/>
    <property type="molecule type" value="mRNA"/>
</dbReference>
<dbReference type="RefSeq" id="NP_001257917.1">
    <property type="nucleotide sequence ID" value="NM_001270988.1"/>
</dbReference>
<dbReference type="RefSeq" id="NP_766009.2">
    <property type="nucleotide sequence ID" value="NM_172421.5"/>
</dbReference>
<dbReference type="SMR" id="Q8BZ32"/>
<dbReference type="BioGRID" id="217375">
    <property type="interactions" value="4"/>
</dbReference>
<dbReference type="FunCoup" id="Q8BZ32">
    <property type="interactions" value="3704"/>
</dbReference>
<dbReference type="STRING" id="10090.ENSMUSP00000117384"/>
<dbReference type="GlyGen" id="Q8BZ32">
    <property type="glycosylation" value="3 sites, 1 N-linked glycan (1 site), 1 O-linked glycan (2 sites)"/>
</dbReference>
<dbReference type="iPTMnet" id="Q8BZ32"/>
<dbReference type="PhosphoSitePlus" id="Q8BZ32"/>
<dbReference type="jPOST" id="Q8BZ32"/>
<dbReference type="PaxDb" id="10090-ENSMUSP00000106846"/>
<dbReference type="ProteomicsDB" id="265120"/>
<dbReference type="Pumba" id="Q8BZ32"/>
<dbReference type="DNASU" id="75302"/>
<dbReference type="GeneID" id="75302"/>
<dbReference type="KEGG" id="mmu:75302"/>
<dbReference type="AGR" id="MGI:1922552"/>
<dbReference type="CTD" id="55252"/>
<dbReference type="MGI" id="MGI:1922552">
    <property type="gene designation" value="Asxl2"/>
</dbReference>
<dbReference type="eggNOG" id="ENOG502QWPH">
    <property type="taxonomic scope" value="Eukaryota"/>
</dbReference>
<dbReference type="InParanoid" id="Q8BZ32"/>
<dbReference type="OrthoDB" id="73231at9989"/>
<dbReference type="Reactome" id="R-MMU-5689603">
    <property type="pathway name" value="UCH proteinases"/>
</dbReference>
<dbReference type="BioGRID-ORCS" id="75302">
    <property type="hits" value="12 hits in 81 CRISPR screens"/>
</dbReference>
<dbReference type="ChiTaRS" id="Asxl2">
    <property type="organism name" value="mouse"/>
</dbReference>
<dbReference type="PRO" id="PR:Q8BZ32"/>
<dbReference type="Proteomes" id="UP000000589">
    <property type="component" value="Unplaced"/>
</dbReference>
<dbReference type="RNAct" id="Q8BZ32">
    <property type="molecule type" value="protein"/>
</dbReference>
<dbReference type="GO" id="GO:0005634">
    <property type="term" value="C:nucleus"/>
    <property type="evidence" value="ECO:0000314"/>
    <property type="project" value="MGI"/>
</dbReference>
<dbReference type="GO" id="GO:0003682">
    <property type="term" value="F:chromatin binding"/>
    <property type="evidence" value="ECO:0000314"/>
    <property type="project" value="MGI"/>
</dbReference>
<dbReference type="GO" id="GO:0003677">
    <property type="term" value="F:DNA binding"/>
    <property type="evidence" value="ECO:0007669"/>
    <property type="project" value="InterPro"/>
</dbReference>
<dbReference type="GO" id="GO:0042975">
    <property type="term" value="F:peroxisome proliferator activated receptor binding"/>
    <property type="evidence" value="ECO:0000250"/>
    <property type="project" value="UniProtKB"/>
</dbReference>
<dbReference type="GO" id="GO:0008270">
    <property type="term" value="F:zinc ion binding"/>
    <property type="evidence" value="ECO:0007669"/>
    <property type="project" value="UniProtKB-KW"/>
</dbReference>
<dbReference type="GO" id="GO:0007512">
    <property type="term" value="P:adult heart development"/>
    <property type="evidence" value="ECO:0000315"/>
    <property type="project" value="MGI"/>
</dbReference>
<dbReference type="GO" id="GO:0035630">
    <property type="term" value="P:bone mineralization involved in bone maturation"/>
    <property type="evidence" value="ECO:0000315"/>
    <property type="project" value="MGI"/>
</dbReference>
<dbReference type="GO" id="GO:0048704">
    <property type="term" value="P:embryonic skeletal system morphogenesis"/>
    <property type="evidence" value="ECO:0000315"/>
    <property type="project" value="MGI"/>
</dbReference>
<dbReference type="GO" id="GO:0007507">
    <property type="term" value="P:heart development"/>
    <property type="evidence" value="ECO:0000315"/>
    <property type="project" value="MGI"/>
</dbReference>
<dbReference type="GO" id="GO:0003007">
    <property type="term" value="P:heart morphogenesis"/>
    <property type="evidence" value="ECO:0000315"/>
    <property type="project" value="MGI"/>
</dbReference>
<dbReference type="GO" id="GO:0030225">
    <property type="term" value="P:macrophage differentiation"/>
    <property type="evidence" value="ECO:0000315"/>
    <property type="project" value="MGI"/>
</dbReference>
<dbReference type="GO" id="GO:0000122">
    <property type="term" value="P:negative regulation of transcription by RNA polymerase II"/>
    <property type="evidence" value="ECO:0000315"/>
    <property type="project" value="MGI"/>
</dbReference>
<dbReference type="GO" id="GO:0030316">
    <property type="term" value="P:osteoclast differentiation"/>
    <property type="evidence" value="ECO:0000315"/>
    <property type="project" value="MGI"/>
</dbReference>
<dbReference type="GO" id="GO:1900159">
    <property type="term" value="P:positive regulation of bone mineralization involved in bone maturation"/>
    <property type="evidence" value="ECO:0000315"/>
    <property type="project" value="MGI"/>
</dbReference>
<dbReference type="GO" id="GO:0045600">
    <property type="term" value="P:positive regulation of fat cell differentiation"/>
    <property type="evidence" value="ECO:0000250"/>
    <property type="project" value="UniProtKB"/>
</dbReference>
<dbReference type="GO" id="GO:0045651">
    <property type="term" value="P:positive regulation of macrophage differentiation"/>
    <property type="evidence" value="ECO:0000315"/>
    <property type="project" value="MGI"/>
</dbReference>
<dbReference type="GO" id="GO:0045672">
    <property type="term" value="P:positive regulation of osteoclast differentiation"/>
    <property type="evidence" value="ECO:0000315"/>
    <property type="project" value="MGI"/>
</dbReference>
<dbReference type="GO" id="GO:0035360">
    <property type="term" value="P:positive regulation of peroxisome proliferator activated receptor signaling pathway"/>
    <property type="evidence" value="ECO:0000250"/>
    <property type="project" value="UniProtKB"/>
</dbReference>
<dbReference type="GO" id="GO:0045944">
    <property type="term" value="P:positive regulation of transcription by RNA polymerase II"/>
    <property type="evidence" value="ECO:0000250"/>
    <property type="project" value="UniProtKB"/>
</dbReference>
<dbReference type="InterPro" id="IPR026905">
    <property type="entry name" value="ASX-like_PHD"/>
</dbReference>
<dbReference type="InterPro" id="IPR024811">
    <property type="entry name" value="ASX/ASX-like"/>
</dbReference>
<dbReference type="InterPro" id="IPR028020">
    <property type="entry name" value="ASX_DEUBAD_dom"/>
</dbReference>
<dbReference type="InterPro" id="IPR007759">
    <property type="entry name" value="Asxl_HARE-HTH"/>
</dbReference>
<dbReference type="InterPro" id="IPR044867">
    <property type="entry name" value="DEUBAD_dom"/>
</dbReference>
<dbReference type="PANTHER" id="PTHR13578">
    <property type="entry name" value="ADDITIONAL SEX COMBS LIKE PROTEIN ASXL"/>
    <property type="match status" value="1"/>
</dbReference>
<dbReference type="PANTHER" id="PTHR13578:SF11">
    <property type="entry name" value="POLYCOMB GROUP PROTEIN ASXL2-RELATED"/>
    <property type="match status" value="1"/>
</dbReference>
<dbReference type="Pfam" id="PF13919">
    <property type="entry name" value="ASXH"/>
    <property type="match status" value="1"/>
</dbReference>
<dbReference type="Pfam" id="PF05066">
    <property type="entry name" value="HARE-HTH"/>
    <property type="match status" value="1"/>
</dbReference>
<dbReference type="Pfam" id="PF13922">
    <property type="entry name" value="PHD_3"/>
    <property type="match status" value="1"/>
</dbReference>
<dbReference type="PROSITE" id="PS51916">
    <property type="entry name" value="DEUBAD"/>
    <property type="match status" value="1"/>
</dbReference>
<dbReference type="PROSITE" id="PS51913">
    <property type="entry name" value="HTH_HARE"/>
    <property type="match status" value="1"/>
</dbReference>
<gene>
    <name type="primary">Asxl2</name>
    <name type="synonym">Kiaa1685</name>
</gene>
<comment type="function">
    <text evidence="1 2 7">Putative Polycomb group (PcG) protein. PcG proteins act by forming multiprotein complexes, which are required to maintain the transcriptionally repressive state of homeotic genes throughout development. PcG proteins are not required to initiate repression, but to maintain it during later stages of development. They probably act via methylation of histones, rendering chromatin heritably changed in its expressibility. Involved in transcriptional regulation mediated by ligand-bound nuclear hormone receptors, such as peroxisome proliferator-activated receptor gamma (PPARG). Acts as a coactivator for PPARG and enhances its adipocyte differentiation-inducing activity; the function seems to involve differential recruitment of acetylated and methylated histone H3 (By similarity). Non-catalytic component of the PR-DUB complex, a complex that specifically mediates deubiquitination of histone H2A monoubiquitinated at 'Lys-119' (H2AK119ub1) (By similarity). The PR-DUB complex is an epigenetic regulator of gene expression and acts as a transcriptional coactivator, affecting genes involved in development, cell communication, signaling, cell proliferation and cell viability (By similarity). ASXL1, ASXL2 and ASXL3 function redundantly in the PR-DUB complex (By similarity) (PubMed:32747411). The ASXL proteins are essential for chromatin recruitment and transcriptional activation of associated genes (PubMed:32747411). ASXL1 and ASXL2 are important for BAP1 protein stability (By similarity).</text>
</comment>
<comment type="subunit">
    <text evidence="2">Core component of the polycomb repressive deubiquitinase (PR-DUB) complex, at least composed of BAP1, one of ASXL1, ASXL2 or (probably) ASXL3, and one of MBD5 or MBD6. Distinct combinations of ASXL and MBD proteins may preferentially bind specific histone modification marks. The PR-DUB core associates with a number of accessory proteins, including FOXK1, FOXK2, KDM1B, HCFC1 and OGT; KDM1B specifically associates with ASXL2 PR-DUB complexes. Interacts (via PHD domain) with MBD5 and MBD6 (via MBD domain); the interaction is probably direct and mediates association of MBD proteins with the PR-DUB core. Interacts with PPARA and PPARG.</text>
</comment>
<comment type="subcellular location">
    <subcellularLocation>
        <location evidence="1">Nucleus</location>
    </subcellularLocation>
</comment>
<comment type="developmental stage">
    <text evidence="8">Low level of expression in trophoblast stem cells that is up-regulated during trophoblast cell differentiation (at protein level).</text>
</comment>
<comment type="domain">
    <text evidence="1">Contains one Leu-Xaa-Xaa-Leu-Leu (LXXLL) motif, which may be required for an association with nuclear receptors.</text>
</comment>
<comment type="similarity">
    <text evidence="9">Belongs to the Asx family.</text>
</comment>
<sequence length="1370" mass="147107">MREKGRRKKGRTWAEAAKTVLEKYPNTPMSHKEILQVIQREGLKEIRSGTSPLACLNAMLHTNSRGEEGIFYKVPGRMGVYTLKKDVPDGVKELSECSEESSDGQSDSHSSDNSSSSDGGSNKEGRKSRWKRKVSSRLSHPPSPPSGCPSPTIPASKVISPSQKHSKKALKQALKQQQQKKKQQQCRPSMSISNQHLSLKTVKAASDSVPAKPGQMKRTKCADIDVETPDSILVNTNLRALINKHTFSVLPGDCQQRLLLLLPEVDRQVGPDGLMKLNGSALNNEFFTSAAQGWKERLSEGEFTPEMQVRIRQEIEKEKKVELWKEQFFENYYGQSSGLSLEDSQKLTASSSDPKAKKTPAEQPKSILPSEASPVRIVPVVPQSECKEEAVQIPSPSQKEENQDEARPDSKSPEPVLASASNTNELITMKPIKSPKDEGLLEQKPVACAEQESEKENHVTTTSRNNKSENQEALAISPSKSKNAGLQKPIIKPVAEASPLNPDMKMPPATVTDQIQESLKRKSSLTDEEATSSWEKRPRITENRQHQQPFQVSPQPFLNRGDRVQVRKVPPLKIPVSRISPMLFSTSQVSPRARFPISITSPYRTGARTLADIKAKAQLVEAQKAAAAAAAAAAAAASVGGTIPGPGPGGGQSPREGGERKIAGGGSAGSDPVSTNGKGPTLELAGTGSRGGTRELLPCGPQPETNMPGQAQPPGISGAQLQQTSSVPTGLASSGACTSVPLPAHIEISNSEKPNLHKATATAASPCHLQDPRSCRLEKALSPTGPPLISGASTVYFVADGTVEPKAGSNKNAPKPSALAKTTAPAPLDMTSSPVTTASLEKLPVPQISGTATSTGSAPSSSTLPAASSLKTPGTSANMNGPISRTSSSIPANNPLVTQLLQGKDVPLEQILPKPLTKIEMKTVPLTTKEEKGIGIFPGISVMESSSREEVNGRQAHLAIPQLGKPLQSKQLSQVPRPVFTAKDRKDPCIDTHQYREGLSKTTQDQLFQTLIQRAQRQSVLSFVPPSQFNFAHSGFHLEDISTSQKFMLGFAGRRTSKPAMAGHYLLNISTYGRGTENIKRTHSVNPDDRFCLSSPTEALRMGHADYKNTTGEISSKEDESDEDRVGDEQEPISVKEEPWASQSSGRHPHHGEASSTNDCLASKNGKTEAPVSEQTTLGQENYIFSRGQASDEKSLPRDFIPAAHKQMTHAVRGKTVCSSPELFNSTALSLPADSPTHQPLLLPPLQTPKLYGSPTQIGPSYRGMINVSTSSDMDHNSAIPGSQVSSNVGDVMSFSVTVTTIPASQAMNPSSHGQTIPVQTFPDDNSIEDTPSKCYCRLKAMIMCKGCGAFCHDDCIGPSKLCVSCLVVR</sequence>
<proteinExistence type="evidence at protein level"/>
<evidence type="ECO:0000250" key="1"/>
<evidence type="ECO:0000250" key="2">
    <source>
        <dbReference type="UniProtKB" id="Q76L83"/>
    </source>
</evidence>
<evidence type="ECO:0000255" key="3"/>
<evidence type="ECO:0000255" key="4">
    <source>
        <dbReference type="PROSITE-ProRule" id="PRU01261"/>
    </source>
</evidence>
<evidence type="ECO:0000255" key="5">
    <source>
        <dbReference type="PROSITE-ProRule" id="PRU01264"/>
    </source>
</evidence>
<evidence type="ECO:0000256" key="6">
    <source>
        <dbReference type="SAM" id="MobiDB-lite"/>
    </source>
</evidence>
<evidence type="ECO:0000269" key="7">
    <source>
    </source>
</evidence>
<evidence type="ECO:0000269" key="8">
    <source>
    </source>
</evidence>
<evidence type="ECO:0000305" key="9"/>
<evidence type="ECO:0007744" key="10">
    <source>
    </source>
</evidence>
<evidence type="ECO:0007744" key="11">
    <source>
    </source>
</evidence>
<reference key="1">
    <citation type="journal article" date="2005" name="Science">
        <title>The transcriptional landscape of the mammalian genome.</title>
        <authorList>
            <person name="Carninci P."/>
            <person name="Kasukawa T."/>
            <person name="Katayama S."/>
            <person name="Gough J."/>
            <person name="Frith M.C."/>
            <person name="Maeda N."/>
            <person name="Oyama R."/>
            <person name="Ravasi T."/>
            <person name="Lenhard B."/>
            <person name="Wells C."/>
            <person name="Kodzius R."/>
            <person name="Shimokawa K."/>
            <person name="Bajic V.B."/>
            <person name="Brenner S.E."/>
            <person name="Batalov S."/>
            <person name="Forrest A.R."/>
            <person name="Zavolan M."/>
            <person name="Davis M.J."/>
            <person name="Wilming L.G."/>
            <person name="Aidinis V."/>
            <person name="Allen J.E."/>
            <person name="Ambesi-Impiombato A."/>
            <person name="Apweiler R."/>
            <person name="Aturaliya R.N."/>
            <person name="Bailey T.L."/>
            <person name="Bansal M."/>
            <person name="Baxter L."/>
            <person name="Beisel K.W."/>
            <person name="Bersano T."/>
            <person name="Bono H."/>
            <person name="Chalk A.M."/>
            <person name="Chiu K.P."/>
            <person name="Choudhary V."/>
            <person name="Christoffels A."/>
            <person name="Clutterbuck D.R."/>
            <person name="Crowe M.L."/>
            <person name="Dalla E."/>
            <person name="Dalrymple B.P."/>
            <person name="de Bono B."/>
            <person name="Della Gatta G."/>
            <person name="di Bernardo D."/>
            <person name="Down T."/>
            <person name="Engstrom P."/>
            <person name="Fagiolini M."/>
            <person name="Faulkner G."/>
            <person name="Fletcher C.F."/>
            <person name="Fukushima T."/>
            <person name="Furuno M."/>
            <person name="Futaki S."/>
            <person name="Gariboldi M."/>
            <person name="Georgii-Hemming P."/>
            <person name="Gingeras T.R."/>
            <person name="Gojobori T."/>
            <person name="Green R.E."/>
            <person name="Gustincich S."/>
            <person name="Harbers M."/>
            <person name="Hayashi Y."/>
            <person name="Hensch T.K."/>
            <person name="Hirokawa N."/>
            <person name="Hill D."/>
            <person name="Huminiecki L."/>
            <person name="Iacono M."/>
            <person name="Ikeo K."/>
            <person name="Iwama A."/>
            <person name="Ishikawa T."/>
            <person name="Jakt M."/>
            <person name="Kanapin A."/>
            <person name="Katoh M."/>
            <person name="Kawasawa Y."/>
            <person name="Kelso J."/>
            <person name="Kitamura H."/>
            <person name="Kitano H."/>
            <person name="Kollias G."/>
            <person name="Krishnan S.P."/>
            <person name="Kruger A."/>
            <person name="Kummerfeld S.K."/>
            <person name="Kurochkin I.V."/>
            <person name="Lareau L.F."/>
            <person name="Lazarevic D."/>
            <person name="Lipovich L."/>
            <person name="Liu J."/>
            <person name="Liuni S."/>
            <person name="McWilliam S."/>
            <person name="Madan Babu M."/>
            <person name="Madera M."/>
            <person name="Marchionni L."/>
            <person name="Matsuda H."/>
            <person name="Matsuzawa S."/>
            <person name="Miki H."/>
            <person name="Mignone F."/>
            <person name="Miyake S."/>
            <person name="Morris K."/>
            <person name="Mottagui-Tabar S."/>
            <person name="Mulder N."/>
            <person name="Nakano N."/>
            <person name="Nakauchi H."/>
            <person name="Ng P."/>
            <person name="Nilsson R."/>
            <person name="Nishiguchi S."/>
            <person name="Nishikawa S."/>
            <person name="Nori F."/>
            <person name="Ohara O."/>
            <person name="Okazaki Y."/>
            <person name="Orlando V."/>
            <person name="Pang K.C."/>
            <person name="Pavan W.J."/>
            <person name="Pavesi G."/>
            <person name="Pesole G."/>
            <person name="Petrovsky N."/>
            <person name="Piazza S."/>
            <person name="Reed J."/>
            <person name="Reid J.F."/>
            <person name="Ring B.Z."/>
            <person name="Ringwald M."/>
            <person name="Rost B."/>
            <person name="Ruan Y."/>
            <person name="Salzberg S.L."/>
            <person name="Sandelin A."/>
            <person name="Schneider C."/>
            <person name="Schoenbach C."/>
            <person name="Sekiguchi K."/>
            <person name="Semple C.A."/>
            <person name="Seno S."/>
            <person name="Sessa L."/>
            <person name="Sheng Y."/>
            <person name="Shibata Y."/>
            <person name="Shimada H."/>
            <person name="Shimada K."/>
            <person name="Silva D."/>
            <person name="Sinclair B."/>
            <person name="Sperling S."/>
            <person name="Stupka E."/>
            <person name="Sugiura K."/>
            <person name="Sultana R."/>
            <person name="Takenaka Y."/>
            <person name="Taki K."/>
            <person name="Tammoja K."/>
            <person name="Tan S.L."/>
            <person name="Tang S."/>
            <person name="Taylor M.S."/>
            <person name="Tegner J."/>
            <person name="Teichmann S.A."/>
            <person name="Ueda H.R."/>
            <person name="van Nimwegen E."/>
            <person name="Verardo R."/>
            <person name="Wei C.L."/>
            <person name="Yagi K."/>
            <person name="Yamanishi H."/>
            <person name="Zabarovsky E."/>
            <person name="Zhu S."/>
            <person name="Zimmer A."/>
            <person name="Hide W."/>
            <person name="Bult C."/>
            <person name="Grimmond S.M."/>
            <person name="Teasdale R.D."/>
            <person name="Liu E.T."/>
            <person name="Brusic V."/>
            <person name="Quackenbush J."/>
            <person name="Wahlestedt C."/>
            <person name="Mattick J.S."/>
            <person name="Hume D.A."/>
            <person name="Kai C."/>
            <person name="Sasaki D."/>
            <person name="Tomaru Y."/>
            <person name="Fukuda S."/>
            <person name="Kanamori-Katayama M."/>
            <person name="Suzuki M."/>
            <person name="Aoki J."/>
            <person name="Arakawa T."/>
            <person name="Iida J."/>
            <person name="Imamura K."/>
            <person name="Itoh M."/>
            <person name="Kato T."/>
            <person name="Kawaji H."/>
            <person name="Kawagashira N."/>
            <person name="Kawashima T."/>
            <person name="Kojima M."/>
            <person name="Kondo S."/>
            <person name="Konno H."/>
            <person name="Nakano K."/>
            <person name="Ninomiya N."/>
            <person name="Nishio T."/>
            <person name="Okada M."/>
            <person name="Plessy C."/>
            <person name="Shibata K."/>
            <person name="Shiraki T."/>
            <person name="Suzuki S."/>
            <person name="Tagami M."/>
            <person name="Waki K."/>
            <person name="Watahiki A."/>
            <person name="Okamura-Oho Y."/>
            <person name="Suzuki H."/>
            <person name="Kawai J."/>
            <person name="Hayashizaki Y."/>
        </authorList>
    </citation>
    <scope>NUCLEOTIDE SEQUENCE [LARGE SCALE MRNA]</scope>
    <source>
        <strain>C57BL/6J</strain>
        <tissue>Vagina</tissue>
    </source>
</reference>
<reference key="2">
    <citation type="journal article" date="2003" name="DNA Res.">
        <title>Prediction of the coding sequences of mouse homologues of KIAA gene: II. The complete nucleotide sequences of 400 mouse KIAA-homologous cDNAs identified by screening of terminal sequences of cDNA clones randomly sampled from size-fractionated libraries.</title>
        <authorList>
            <person name="Okazaki N."/>
            <person name="Kikuno R."/>
            <person name="Ohara R."/>
            <person name="Inamoto S."/>
            <person name="Aizawa H."/>
            <person name="Yuasa S."/>
            <person name="Nakajima D."/>
            <person name="Nagase T."/>
            <person name="Ohara O."/>
            <person name="Koga H."/>
        </authorList>
    </citation>
    <scope>NUCLEOTIDE SEQUENCE [LARGE SCALE MRNA] OF 311-1370</scope>
    <source>
        <tissue>Brain</tissue>
    </source>
</reference>
<reference key="3">
    <citation type="journal article" date="2007" name="Proc. Natl. Acad. Sci. U.S.A.">
        <title>Large-scale phosphorylation analysis of mouse liver.</title>
        <authorList>
            <person name="Villen J."/>
            <person name="Beausoleil S.A."/>
            <person name="Gerber S.A."/>
            <person name="Gygi S.P."/>
        </authorList>
    </citation>
    <scope>IDENTIFICATION BY MASS SPECTROMETRY [LARGE SCALE ANALYSIS]</scope>
    <source>
        <tissue>Liver</tissue>
    </source>
</reference>
<reference key="4">
    <citation type="journal article" date="2010" name="Cell">
        <title>A tissue-specific atlas of mouse protein phosphorylation and expression.</title>
        <authorList>
            <person name="Huttlin E.L."/>
            <person name="Jedrychowski M.P."/>
            <person name="Elias J.E."/>
            <person name="Goswami T."/>
            <person name="Rad R."/>
            <person name="Beausoleil S.A."/>
            <person name="Villen J."/>
            <person name="Haas W."/>
            <person name="Sowa M.E."/>
            <person name="Gygi S.P."/>
        </authorList>
    </citation>
    <scope>PHOSPHORYLATION [LARGE SCALE ANALYSIS] AT SER-1121</scope>
    <scope>IDENTIFICATION BY MASS SPECTROMETRY [LARGE SCALE ANALYSIS]</scope>
    <source>
        <tissue>Kidney</tissue>
        <tissue>Lung</tissue>
        <tissue>Spleen</tissue>
    </source>
</reference>
<reference key="5">
    <citation type="journal article" date="2014" name="Mol. Cell. Proteomics">
        <title>Immunoaffinity enrichment and mass spectrometry analysis of protein methylation.</title>
        <authorList>
            <person name="Guo A."/>
            <person name="Gu H."/>
            <person name="Zhou J."/>
            <person name="Mulhern D."/>
            <person name="Wang Y."/>
            <person name="Lee K.A."/>
            <person name="Yang V."/>
            <person name="Aguiar M."/>
            <person name="Kornhauser J."/>
            <person name="Jia X."/>
            <person name="Ren J."/>
            <person name="Beausoleil S.A."/>
            <person name="Silva J.C."/>
            <person name="Vemulapalli V."/>
            <person name="Bedford M.T."/>
            <person name="Comb M.J."/>
        </authorList>
    </citation>
    <scope>METHYLATION [LARGE SCALE ANALYSIS] AT ARG-594</scope>
    <scope>IDENTIFICATION BY MASS SPECTROMETRY [LARGE SCALE ANALYSIS]</scope>
    <source>
        <tissue>Embryo</tissue>
    </source>
</reference>
<reference key="6">
    <citation type="journal article" date="2020" name="Genome Res.">
        <title>PR-DUB maintains the expression of critical genes through FOXK1/2- and ASXL1/2/3-dependent recruitment to chromatin and H2AK119ub1 deubiquitination.</title>
        <authorList>
            <person name="Kolovos P."/>
            <person name="Nishimura K."/>
            <person name="Sankar A."/>
            <person name="Sidoli S."/>
            <person name="Cloos P.A."/>
            <person name="Helin K."/>
            <person name="Christensen J."/>
        </authorList>
    </citation>
    <scope>FUNCTION</scope>
</reference>
<reference key="7">
    <citation type="journal article" date="2021" name="Elife">
        <title>BAP1/ASXL complex modulation regulates epithelial-mesenchymal transition during trophoblast differentiation and invasion.</title>
        <authorList>
            <person name="Perez-Garcia V."/>
            <person name="Lea G."/>
            <person name="Lopez-Jimenez P."/>
            <person name="Okkenhaug H."/>
            <person name="Burton G.J."/>
            <person name="Moffett A."/>
            <person name="Turco M.Y."/>
            <person name="Hemberger M."/>
        </authorList>
    </citation>
    <scope>DEVELOPMENTAL STAGE</scope>
</reference>
<accession>Q8BZ32</accession>
<accession>Q3TRU9</accession>
<accession>Q80TA5</accession>
<feature type="chain" id="PRO_0000313827" description="Putative Polycomb group protein ASXL2">
    <location>
        <begin position="1"/>
        <end position="1370"/>
    </location>
</feature>
<feature type="domain" description="HTH HARE-type" evidence="4">
    <location>
        <begin position="11"/>
        <end position="86"/>
    </location>
</feature>
<feature type="domain" description="DEUBAD" evidence="5">
    <location>
        <begin position="229"/>
        <end position="338"/>
    </location>
</feature>
<feature type="zinc finger region" description="PHD-type; atypical">
    <location>
        <begin position="1332"/>
        <end position="1369"/>
    </location>
</feature>
<feature type="region of interest" description="Disordered" evidence="6">
    <location>
        <begin position="92"/>
        <end position="216"/>
    </location>
</feature>
<feature type="region of interest" description="Disordered" evidence="6">
    <location>
        <begin position="340"/>
        <end position="487"/>
    </location>
</feature>
<feature type="region of interest" description="Disordered" evidence="6">
    <location>
        <begin position="516"/>
        <end position="535"/>
    </location>
</feature>
<feature type="region of interest" description="Disordered" evidence="6">
    <location>
        <begin position="643"/>
        <end position="734"/>
    </location>
</feature>
<feature type="region of interest" description="Disordered" evidence="6">
    <location>
        <begin position="805"/>
        <end position="891"/>
    </location>
</feature>
<feature type="region of interest" description="Disordered" evidence="6">
    <location>
        <begin position="1103"/>
        <end position="1175"/>
    </location>
</feature>
<feature type="short sequence motif" description="Nuclear localization signal" evidence="3">
    <location>
        <begin position="178"/>
        <end position="182"/>
    </location>
</feature>
<feature type="short sequence motif" description="LXXLL motif">
    <location>
        <begin position="258"/>
        <end position="262"/>
    </location>
</feature>
<feature type="compositionally biased region" description="Low complexity" evidence="6">
    <location>
        <begin position="103"/>
        <end position="120"/>
    </location>
</feature>
<feature type="compositionally biased region" description="Pro residues" evidence="6">
    <location>
        <begin position="141"/>
        <end position="152"/>
    </location>
</feature>
<feature type="compositionally biased region" description="Polar residues" evidence="6">
    <location>
        <begin position="186"/>
        <end position="198"/>
    </location>
</feature>
<feature type="compositionally biased region" description="Basic and acidic residues" evidence="6">
    <location>
        <begin position="398"/>
        <end position="412"/>
    </location>
</feature>
<feature type="compositionally biased region" description="Gly residues" evidence="6">
    <location>
        <begin position="643"/>
        <end position="652"/>
    </location>
</feature>
<feature type="compositionally biased region" description="Polar residues" evidence="6">
    <location>
        <begin position="719"/>
        <end position="734"/>
    </location>
</feature>
<feature type="compositionally biased region" description="Polar residues" evidence="6">
    <location>
        <begin position="830"/>
        <end position="839"/>
    </location>
</feature>
<feature type="compositionally biased region" description="Low complexity" evidence="6">
    <location>
        <begin position="849"/>
        <end position="870"/>
    </location>
</feature>
<feature type="compositionally biased region" description="Polar residues" evidence="6">
    <location>
        <begin position="871"/>
        <end position="891"/>
    </location>
</feature>
<feature type="compositionally biased region" description="Acidic residues" evidence="6">
    <location>
        <begin position="1119"/>
        <end position="1131"/>
    </location>
</feature>
<feature type="modified residue" description="Phosphoserine" evidence="2">
    <location>
        <position position="150"/>
    </location>
</feature>
<feature type="modified residue" description="Phosphoserine" evidence="2">
    <location>
        <position position="477"/>
    </location>
</feature>
<feature type="modified residue" description="Phosphoserine" evidence="2">
    <location>
        <position position="524"/>
    </location>
</feature>
<feature type="modified residue" description="Phosphoserine" evidence="2">
    <location>
        <position position="553"/>
    </location>
</feature>
<feature type="modified residue" description="Phosphoserine" evidence="2">
    <location>
        <position position="590"/>
    </location>
</feature>
<feature type="modified residue" description="Asymmetric dimethylarginine" evidence="11">
    <location>
        <position position="594"/>
    </location>
</feature>
<feature type="modified residue" description="Phosphoserine" evidence="2">
    <location>
        <position position="601"/>
    </location>
</feature>
<feature type="modified residue" description="Phosphoserine" evidence="10">
    <location>
        <position position="1121"/>
    </location>
</feature>
<feature type="modified residue" description="Phosphoserine" evidence="2">
    <location>
        <position position="1254"/>
    </location>
</feature>
<feature type="sequence conflict" description="In Ref. 1; BAE36927." evidence="9" ref="1">
    <original>V</original>
    <variation>S</variation>
    <location>
        <position position="564"/>
    </location>
</feature>
<feature type="sequence conflict" description="In Ref. 1; BAE36927 and 2; BAC65822." evidence="9" ref="1 2">
    <original>E</original>
    <variation>K</variation>
    <location>
        <position position="621"/>
    </location>
</feature>
<feature type="sequence conflict" description="In Ref. 1; BAE36927." evidence="9" ref="1">
    <original>A</original>
    <variation>P</variation>
    <location>
        <position position="627"/>
    </location>
</feature>
<feature type="sequence conflict" description="In Ref. 2; BAC65822." evidence="9" ref="2">
    <original>P</original>
    <variation>L</variation>
    <location>
        <position position="646"/>
    </location>
</feature>
<feature type="sequence conflict" description="In Ref. 1; BAE36927." evidence="9" ref="1">
    <original>G</original>
    <variation>V</variation>
    <location>
        <position position="686"/>
    </location>
</feature>
<keyword id="KW-0479">Metal-binding</keyword>
<keyword id="KW-0488">Methylation</keyword>
<keyword id="KW-0539">Nucleus</keyword>
<keyword id="KW-0597">Phosphoprotein</keyword>
<keyword id="KW-1185">Reference proteome</keyword>
<keyword id="KW-0678">Repressor</keyword>
<keyword id="KW-0804">Transcription</keyword>
<keyword id="KW-0805">Transcription regulation</keyword>
<keyword id="KW-0833">Ubl conjugation pathway</keyword>
<keyword id="KW-0862">Zinc</keyword>
<keyword id="KW-0863">Zinc-finger</keyword>
<organism>
    <name type="scientific">Mus musculus</name>
    <name type="common">Mouse</name>
    <dbReference type="NCBI Taxonomy" id="10090"/>
    <lineage>
        <taxon>Eukaryota</taxon>
        <taxon>Metazoa</taxon>
        <taxon>Chordata</taxon>
        <taxon>Craniata</taxon>
        <taxon>Vertebrata</taxon>
        <taxon>Euteleostomi</taxon>
        <taxon>Mammalia</taxon>
        <taxon>Eutheria</taxon>
        <taxon>Euarchontoglires</taxon>
        <taxon>Glires</taxon>
        <taxon>Rodentia</taxon>
        <taxon>Myomorpha</taxon>
        <taxon>Muroidea</taxon>
        <taxon>Muridae</taxon>
        <taxon>Murinae</taxon>
        <taxon>Mus</taxon>
        <taxon>Mus</taxon>
    </lineage>
</organism>
<protein>
    <recommendedName>
        <fullName>Putative Polycomb group protein ASXL2</fullName>
    </recommendedName>
    <alternativeName>
        <fullName>Additional sex combs-like protein 2</fullName>
    </alternativeName>
</protein>